<protein>
    <recommendedName>
        <fullName evidence="1">Flagellar P-ring protein</fullName>
    </recommendedName>
    <alternativeName>
        <fullName evidence="1">Basal body P-ring protein</fullName>
    </alternativeName>
</protein>
<name>FLGI_XANCB</name>
<proteinExistence type="inferred from homology"/>
<evidence type="ECO:0000255" key="1">
    <source>
        <dbReference type="HAMAP-Rule" id="MF_00416"/>
    </source>
</evidence>
<keyword id="KW-0975">Bacterial flagellum</keyword>
<keyword id="KW-0574">Periplasm</keyword>
<keyword id="KW-0732">Signal</keyword>
<organism>
    <name type="scientific">Xanthomonas campestris pv. campestris (strain B100)</name>
    <dbReference type="NCBI Taxonomy" id="509169"/>
    <lineage>
        <taxon>Bacteria</taxon>
        <taxon>Pseudomonadati</taxon>
        <taxon>Pseudomonadota</taxon>
        <taxon>Gammaproteobacteria</taxon>
        <taxon>Lysobacterales</taxon>
        <taxon>Lysobacteraceae</taxon>
        <taxon>Xanthomonas</taxon>
    </lineage>
</organism>
<sequence>MNLSSLPFRLLAAAVALCAIAAPASAERIKDLAQVGGVRGNALVGYGLVVGLDGSGDRTSQAPFTVQSLKNLLGELGVNVPANVNPQLKNVAAVAIHAELPPFAKPGQPIDITVSSIANAVSLRGGSLLMAPLKGADGQVYAMAQGNLVVGGFGAQGKDGSRVSVNIPSVGRIPNGATVERALPDVFAGSGEITLNLHQNDFTTVSRMVAAIDNSFGAGTARAVDGVTVSVRSPTDPSARIGLLARLENVELSPGDAPAKVVVNARTGTVVIGQLVRVMPAAIAHGSLTVTISENTNVSQPGAFSGGRTAVTPQSTIKATSEGSRMFKFEGGTTLDQIVRAVNEVGAAPGDLVAILEALKQAGALTAELEVI</sequence>
<comment type="function">
    <text evidence="1">Assembles around the rod to form the L-ring and probably protects the motor/basal body from shearing forces during rotation.</text>
</comment>
<comment type="subunit">
    <text evidence="1">The basal body constitutes a major portion of the flagellar organelle and consists of four rings (L,P,S, and M) mounted on a central rod.</text>
</comment>
<comment type="subcellular location">
    <subcellularLocation>
        <location evidence="1">Periplasm</location>
    </subcellularLocation>
    <subcellularLocation>
        <location evidence="1">Bacterial flagellum basal body</location>
    </subcellularLocation>
</comment>
<comment type="similarity">
    <text evidence="1">Belongs to the FlgI family.</text>
</comment>
<accession>B0RT12</accession>
<dbReference type="EMBL" id="AM920689">
    <property type="protein sequence ID" value="CAP51598.1"/>
    <property type="molecule type" value="Genomic_DNA"/>
</dbReference>
<dbReference type="SMR" id="B0RT12"/>
<dbReference type="KEGG" id="xca:xcc-b100_2243"/>
<dbReference type="HOGENOM" id="CLU_045235_1_0_6"/>
<dbReference type="Proteomes" id="UP000001188">
    <property type="component" value="Chromosome"/>
</dbReference>
<dbReference type="GO" id="GO:0009428">
    <property type="term" value="C:bacterial-type flagellum basal body, distal rod, P ring"/>
    <property type="evidence" value="ECO:0007669"/>
    <property type="project" value="InterPro"/>
</dbReference>
<dbReference type="GO" id="GO:0030288">
    <property type="term" value="C:outer membrane-bounded periplasmic space"/>
    <property type="evidence" value="ECO:0007669"/>
    <property type="project" value="InterPro"/>
</dbReference>
<dbReference type="GO" id="GO:0005198">
    <property type="term" value="F:structural molecule activity"/>
    <property type="evidence" value="ECO:0007669"/>
    <property type="project" value="InterPro"/>
</dbReference>
<dbReference type="GO" id="GO:0071973">
    <property type="term" value="P:bacterial-type flagellum-dependent cell motility"/>
    <property type="evidence" value="ECO:0007669"/>
    <property type="project" value="InterPro"/>
</dbReference>
<dbReference type="HAMAP" id="MF_00416">
    <property type="entry name" value="FlgI"/>
    <property type="match status" value="1"/>
</dbReference>
<dbReference type="InterPro" id="IPR001782">
    <property type="entry name" value="Flag_FlgI"/>
</dbReference>
<dbReference type="NCBIfam" id="NF003676">
    <property type="entry name" value="PRK05303.1"/>
    <property type="match status" value="1"/>
</dbReference>
<dbReference type="PANTHER" id="PTHR30381">
    <property type="entry name" value="FLAGELLAR P-RING PERIPLASMIC PROTEIN FLGI"/>
    <property type="match status" value="1"/>
</dbReference>
<dbReference type="PANTHER" id="PTHR30381:SF0">
    <property type="entry name" value="FLAGELLAR P-RING PROTEIN"/>
    <property type="match status" value="1"/>
</dbReference>
<dbReference type="Pfam" id="PF02119">
    <property type="entry name" value="FlgI"/>
    <property type="match status" value="1"/>
</dbReference>
<dbReference type="PRINTS" id="PR01010">
    <property type="entry name" value="FLGPRINGFLGI"/>
</dbReference>
<reference key="1">
    <citation type="journal article" date="2008" name="J. Biotechnol.">
        <title>The genome of Xanthomonas campestris pv. campestris B100 and its use for the reconstruction of metabolic pathways involved in xanthan biosynthesis.</title>
        <authorList>
            <person name="Vorhoelter F.-J."/>
            <person name="Schneiker S."/>
            <person name="Goesmann A."/>
            <person name="Krause L."/>
            <person name="Bekel T."/>
            <person name="Kaiser O."/>
            <person name="Linke B."/>
            <person name="Patschkowski T."/>
            <person name="Rueckert C."/>
            <person name="Schmid J."/>
            <person name="Sidhu V.K."/>
            <person name="Sieber V."/>
            <person name="Tauch A."/>
            <person name="Watt S.A."/>
            <person name="Weisshaar B."/>
            <person name="Becker A."/>
            <person name="Niehaus K."/>
            <person name="Puehler A."/>
        </authorList>
    </citation>
    <scope>NUCLEOTIDE SEQUENCE [LARGE SCALE GENOMIC DNA]</scope>
    <source>
        <strain>B100</strain>
    </source>
</reference>
<feature type="signal peptide" evidence="1">
    <location>
        <begin position="1"/>
        <end position="26"/>
    </location>
</feature>
<feature type="chain" id="PRO_1000123985" description="Flagellar P-ring protein">
    <location>
        <begin position="27"/>
        <end position="372"/>
    </location>
</feature>
<gene>
    <name evidence="1" type="primary">flgI</name>
    <name type="ordered locus">xcc-b100_2243</name>
</gene>